<evidence type="ECO:0000255" key="1"/>
<evidence type="ECO:0000269" key="2">
    <source>
    </source>
</evidence>
<evidence type="ECO:0000269" key="3">
    <source>
    </source>
</evidence>
<evidence type="ECO:0000269" key="4">
    <source>
    </source>
</evidence>
<evidence type="ECO:0000305" key="5"/>
<evidence type="ECO:0000305" key="6">
    <source>
    </source>
</evidence>
<evidence type="ECO:0000305" key="7">
    <source>
    </source>
</evidence>
<evidence type="ECO:0007744" key="8">
    <source>
        <dbReference type="PDB" id="6Z6E"/>
    </source>
</evidence>
<evidence type="ECO:0007744" key="9">
    <source>
        <dbReference type="PDB" id="8POP"/>
    </source>
</evidence>
<proteinExistence type="evidence at protein level"/>
<organismHost>
    <name type="scientific">Escherichia coli</name>
    <dbReference type="NCBI Taxonomy" id="562"/>
</organismHost>
<sequence>MADKRIRSDSSAAAVQAMKNAAVDTIDPPSHAGLEKKAEPFWHDNIRSKALDSWTPADLLAAVELANNQLYITVLRKDLRKEERIRGEERDEGLIKDLRKQIVELQRTILAQRRDLQIHSHATNGESRDQKKRNQNDRDARNTKNEHQDQDDNLIAFPKHG</sequence>
<organism>
    <name type="scientific">Enterobacteria phage HK97</name>
    <name type="common">Bacteriophage HK97</name>
    <dbReference type="NCBI Taxonomy" id="2681617"/>
    <lineage>
        <taxon>Viruses</taxon>
        <taxon>Duplodnaviria</taxon>
        <taxon>Heunggongvirae</taxon>
        <taxon>Uroviricota</taxon>
        <taxon>Caudoviricetes</taxon>
        <taxon>Hendrixvirinae</taxon>
        <taxon>Byrnievirus</taxon>
        <taxon>Byrnievirus HK97</taxon>
    </lineage>
</organism>
<dbReference type="EMBL" id="AF069529">
    <property type="protein sequence ID" value="AAF31097.1"/>
    <property type="molecule type" value="Genomic_DNA"/>
</dbReference>
<dbReference type="RefSeq" id="NP_037697.1">
    <property type="nucleotide sequence ID" value="NC_002167.1"/>
</dbReference>
<dbReference type="PDB" id="6Z6E">
    <property type="method" value="X-ray"/>
    <property type="resolution" value="1.40 A"/>
    <property type="chains" value="A/B/C=2-161"/>
</dbReference>
<dbReference type="PDB" id="8POP">
    <property type="method" value="EM"/>
    <property type="resolution" value="3.00 A"/>
    <property type="chains" value="A/B/C/D/E/F/G/H/I=1-161"/>
</dbReference>
<dbReference type="PDBsum" id="6Z6E"/>
<dbReference type="PDBsum" id="8POP"/>
<dbReference type="EMDB" id="EMD-17794"/>
<dbReference type="EMDB" id="EMD-17818"/>
<dbReference type="SMR" id="Q9MBW4"/>
<dbReference type="GeneID" id="1262527"/>
<dbReference type="KEGG" id="vg:1262527"/>
<dbReference type="Proteomes" id="UP000002576">
    <property type="component" value="Genome"/>
</dbReference>
<reference key="1">
    <citation type="journal article" date="2000" name="J. Mol. Biol.">
        <title>Genomic sequences of bacteriophages HK97 and HK022: pervasive genetic mosaicism in the lambdoid bacteriophages.</title>
        <authorList>
            <person name="Juhala R.J."/>
            <person name="Ford M.E."/>
            <person name="Duda R.L."/>
            <person name="Youlton A."/>
            <person name="Hatfull G.F."/>
            <person name="Hendrix R.W."/>
        </authorList>
    </citation>
    <scope>NUCLEOTIDE SEQUENCE [GENOMIC DNA]</scope>
</reference>
<reference key="2">
    <citation type="journal article" date="2021" name="Virology">
        <title>The coevolution of large and small terminases of bacteriophages is a result of purifying selection leading to phenotypic stabilization.</title>
        <authorList>
            <person name="Wangchuk J."/>
            <person name="Chatterjee A."/>
            <person name="Patil S."/>
            <person name="Madugula S.K."/>
            <person name="Kondabagil K."/>
        </authorList>
    </citation>
    <scope>DOMAIN</scope>
</reference>
<reference key="3">
    <citation type="journal article" date="2023" name="Nucleic Acids Res.">
        <title>Insights into a viral motor: the structure of the HK97 packaging termination assembly.</title>
        <authorList>
            <person name="Hawkins D.E.D.P."/>
            <person name="Bayfield O.W."/>
            <person name="Fung H.K.H."/>
            <person name="Grba D.N."/>
            <person name="Huet A."/>
            <person name="Conway J.F."/>
            <person name="Antson A.A."/>
        </authorList>
    </citation>
    <scope>INTERACTION WITH THE TERMINASE LARGE SUBUNIT</scope>
</reference>
<reference evidence="8" key="4">
    <citation type="journal article" date="2022" name="Nucleic Acids Res.">
        <title>Structural basis of DNA packaging by a ring-type ATPase from an archetypal viral system.</title>
        <authorList>
            <person name="Fung H.K.H."/>
            <person name="Grimes S."/>
            <person name="Huet A."/>
            <person name="Duda R.L."/>
            <person name="Chechik M."/>
            <person name="Gault J."/>
            <person name="Robinson C.V."/>
            <person name="Hendrix R.W."/>
            <person name="Jardine P.J."/>
            <person name="Conway J.F."/>
            <person name="Baumann C.G."/>
            <person name="Antson A.A."/>
        </authorList>
    </citation>
    <scope>X-RAY CRYSTALLOGRAPHY (1.40 ANGSTROMS) OF 2-161</scope>
    <scope>SUBUNIT</scope>
    <scope>FUNCTION</scope>
</reference>
<reference evidence="9" key="5">
    <citation type="journal article" date="2024" name="Proc. Natl. Acad. Sci. U.S.A.">
        <title>Structural basis for DNA recognition by a viral genome-packaging machine.</title>
        <authorList>
            <person name="Chechik M."/>
            <person name="Greive S.J."/>
            <person name="Antson A.A."/>
            <person name="Jenkins H.T."/>
        </authorList>
    </citation>
    <scope>STRUCTURE BY ELECTRON MICROSCOPY (3.00 ANGSTROMS)</scope>
    <scope>DNA-BINDING</scope>
    <scope>SUBUNIT</scope>
    <scope>FUNCTION</scope>
</reference>
<name>TERS_BPHK7</name>
<feature type="chain" id="PRO_0000462347" description="Terminase, small subunit">
    <location>
        <begin position="1"/>
        <end position="161"/>
    </location>
</feature>
<feature type="region of interest" description="Helix-turn-helix (HTH)" evidence="6">
    <location>
        <begin position="37"/>
        <end position="60"/>
    </location>
</feature>
<feature type="coiled-coil region" evidence="1">
    <location>
        <begin position="88"/>
        <end position="115"/>
    </location>
</feature>
<feature type="binding site" evidence="4">
    <location>
        <position position="96"/>
    </location>
    <ligand>
        <name>DNA</name>
        <dbReference type="ChEBI" id="CHEBI:16991"/>
    </ligand>
</feature>
<feature type="binding site" evidence="4">
    <location>
        <position position="100"/>
    </location>
    <ligand>
        <name>DNA</name>
        <dbReference type="ChEBI" id="CHEBI:16991"/>
    </ligand>
</feature>
<feature type="binding site" evidence="4">
    <location>
        <position position="107"/>
    </location>
    <ligand>
        <name>DNA</name>
        <dbReference type="ChEBI" id="CHEBI:16991"/>
    </ligand>
</feature>
<feature type="binding site" evidence="4">
    <location>
        <position position="114"/>
    </location>
    <ligand>
        <name>DNA</name>
        <dbReference type="ChEBI" id="CHEBI:16991"/>
    </ligand>
</feature>
<feature type="binding site" evidence="4">
    <location>
        <position position="128"/>
    </location>
    <ligand>
        <name>DNA</name>
        <dbReference type="ChEBI" id="CHEBI:16991"/>
    </ligand>
</feature>
<keyword id="KW-0002">3D-structure</keyword>
<keyword id="KW-0175">Coiled coil</keyword>
<keyword id="KW-0238">DNA-binding</keyword>
<keyword id="KW-1185">Reference proteome</keyword>
<keyword id="KW-0231">Viral genome packaging</keyword>
<keyword id="KW-1188">Viral release from host cell</keyword>
<comment type="function">
    <text evidence="2 7">The terminase small subunit binds to the packaging initiation site and regulates the ATPase activity of the terminase large subunit (PubMed:35947691). The terminase lies at a unique vertex of the procapsid and is composed of two subunits, a small terminase subunit involved in viral DNA recognition (packaging sequence), and a large terminase subunit possessing endonucleolytic and ATPase activities (Probable). Both terminase subunits heterooligomerize and are docked on the portal protein to form the packaging machine (Probable). Packaging initiates by TerS recognizing the packaging sequence in the viral DNA (PubMed:35947691). The nuclease activity of TerL cuts the viral DNA and the terminase-DNA complex binds to the portal of a procapsid shell (PubMed:35947691). DNA is translocated into the capsid, powered by the packaging ATPase in TerL, which continues until the next site is encountered at which point the motor stops and again cuts the DNA to release the nucleocapsid filled with a unit-length genome ('unit length' packaging) (Probable).</text>
</comment>
<comment type="subunit">
    <text evidence="2 3 4">Homononamer; forms a ring-like structure through which genomic DNA is translocated into the capsid (PubMed:35947691, PubMed:39116131). Interacts with the terminase small subunit; the active complex is composed of a pentamer ring of terminase large subunits and a nonamer ring of terminase small subunits (PubMed:37293963). Binds a specific sequence on the viral genome (PubMed:39116131). DNA transits through the central tunnel formed by the small subunit and sequence-specific recognition for packaging initiation and termination takes place as it emerges (PubMed:39116131).</text>
</comment>
<comment type="domain">
    <text evidence="6">Contains a helix-turn-helix (HTH) doamin that is involved in viral DNA binding.</text>
</comment>
<comment type="similarity">
    <text evidence="5">Belongs to the Hendrixvirinae small terminase family.</text>
</comment>
<accession>Q9MBW4</accession>
<protein>
    <recommendedName>
        <fullName>Terminase, small subunit</fullName>
    </recommendedName>
    <alternativeName>
        <fullName>DNA-packaging protein gp1</fullName>
    </alternativeName>
</protein>
<gene>
    <name type="primary">1</name>
</gene>